<name>VG60_ICHVA</name>
<protein>
    <recommendedName>
        <fullName>Uncharacterized protein ORF60</fullName>
    </recommendedName>
</protein>
<accession>Q00125</accession>
<keyword id="KW-1185">Reference proteome</keyword>
<feature type="chain" id="PRO_0000222139" description="Uncharacterized protein ORF60">
    <location>
        <begin position="1"/>
        <end position="393"/>
    </location>
</feature>
<feature type="region of interest" description="Disordered" evidence="1">
    <location>
        <begin position="345"/>
        <end position="393"/>
    </location>
</feature>
<feature type="compositionally biased region" description="Basic and acidic residues" evidence="1">
    <location>
        <begin position="349"/>
        <end position="361"/>
    </location>
</feature>
<feature type="compositionally biased region" description="Basic residues" evidence="1">
    <location>
        <begin position="383"/>
        <end position="393"/>
    </location>
</feature>
<evidence type="ECO:0000256" key="1">
    <source>
        <dbReference type="SAM" id="MobiDB-lite"/>
    </source>
</evidence>
<organism>
    <name type="scientific">Ictalurid herpesvirus 1 (strain Auburn)</name>
    <name type="common">IcHV-1</name>
    <name type="synonym">Channel catfish herpesvirus</name>
    <dbReference type="NCBI Taxonomy" id="766178"/>
    <lineage>
        <taxon>Viruses</taxon>
        <taxon>Duplodnaviria</taxon>
        <taxon>Heunggongvirae</taxon>
        <taxon>Peploviricota</taxon>
        <taxon>Herviviricetes</taxon>
        <taxon>Herpesvirales</taxon>
        <taxon>Alloherpesviridae</taxon>
        <taxon>Ictavirus</taxon>
        <taxon>Ictavirus ictaluridallo1</taxon>
        <taxon>Ictalurid herpesvirus 1</taxon>
    </lineage>
</organism>
<sequence length="393" mass="43984">MMILSKARCVELLEMPIETINGDWRFKASPHVTTRGVTEGVALLHMNSVRVVPGKGVVSRVDRANDFLSFLYHDISRISAGTCEPRESMLAVILPIDKVEEYVAKFRRVEPFTMGGFREACRALKFSAAVGTIFDRIMKDIFNRSPTLAMDGIPPLAKGLCFVLKSRGITPIRGGLLVGEIPKACGDHCPKCGAQYATRKSRFVTEIDLVGFDSTDNTCVLIEVKTYKNSVLPIAVLKKYNTQTWINWFLFGLMYPHLRQYTKSLIAVVSPAGRVVQLFNVRSPPITRRMISAFPFLGEYCPQMRRMMTAAAMTYVIKAPFVAAHVTGTDNVSIEVFSQSNKLPPNKWATDDAARREMERTRKARYRAKNRAVADPEDSPPGKRLRRGPKSST</sequence>
<proteinExistence type="predicted"/>
<gene>
    <name type="primary">ORF60</name>
</gene>
<reference key="1">
    <citation type="journal article" date="1992" name="Virology">
        <title>Channel catfish virus: a new type of herpesvirus.</title>
        <authorList>
            <person name="Davison A.J."/>
        </authorList>
    </citation>
    <scope>NUCLEOTIDE SEQUENCE [LARGE SCALE GENOMIC DNA]</scope>
</reference>
<dbReference type="EMBL" id="M75136">
    <property type="protein sequence ID" value="AAA88163.1"/>
    <property type="molecule type" value="Genomic_DNA"/>
</dbReference>
<dbReference type="PIR" id="G36792">
    <property type="entry name" value="G36792"/>
</dbReference>
<dbReference type="RefSeq" id="NP_041151.1">
    <property type="nucleotide sequence ID" value="NC_001493.2"/>
</dbReference>
<dbReference type="GeneID" id="1488386"/>
<dbReference type="KEGG" id="vg:1488386"/>
<dbReference type="Proteomes" id="UP000007643">
    <property type="component" value="Segment"/>
</dbReference>
<organismHost>
    <name type="scientific">Ictaluridae</name>
    <name type="common">bullhead catfishes</name>
    <dbReference type="NCBI Taxonomy" id="7996"/>
</organismHost>